<feature type="chain" id="PRO_0000174064" description="Insecticidal crystal toxin protein">
    <location>
        <begin position="1"/>
        <end position="281"/>
    </location>
</feature>
<feature type="region of interest" description="Antigenic epitope">
    <location>
        <begin position="54"/>
        <end position="78"/>
    </location>
</feature>
<feature type="region of interest" description="Antigenic epitope">
    <location>
        <begin position="91"/>
        <end position="104"/>
    </location>
</feature>
<feature type="region of interest" description="Antigenic epitope">
    <location>
        <begin position="108"/>
        <end position="116"/>
    </location>
</feature>
<feature type="region of interest" description="Antigenic epitope">
    <location>
        <begin position="131"/>
        <end position="148"/>
    </location>
</feature>
<feature type="region of interest" description="Antigenic epitope">
    <location>
        <begin position="160"/>
        <end position="172"/>
    </location>
</feature>
<feature type="region of interest" description="Antigenic epitope">
    <location>
        <begin position="189"/>
        <end position="196"/>
    </location>
</feature>
<feature type="region of interest" description="Antigenic epitope">
    <location>
        <begin position="208"/>
        <end position="216"/>
    </location>
</feature>
<feature type="region of interest" description="Antigenic epitope">
    <location>
        <begin position="221"/>
        <end position="236"/>
    </location>
</feature>
<feature type="region of interest" description="Antigenic epitope">
    <location>
        <begin position="247"/>
        <end position="256"/>
    </location>
</feature>
<keyword id="KW-0903">Direct protein sequencing</keyword>
<keyword id="KW-0749">Sporulation</keyword>
<keyword id="KW-0800">Toxin</keyword>
<keyword id="KW-0843">Virulence</keyword>
<name>CR4AA_BACTK</name>
<reference key="1">
    <citation type="submission" date="2005-07" db="UniProtKB">
        <authorList>
            <person name="Gomase V.S."/>
            <person name="Chikhale N.J."/>
            <person name="Vankhede G.N."/>
        </authorList>
    </citation>
    <scope>PROTEIN SEQUENCE</scope>
    <source>
        <tissue>Spore</tissue>
    </source>
</reference>
<comment type="function">
    <text>Promotes colloidosmotic lysis by binding to the midgut epithelial cells of insects. Active against Mamestra brassicae.</text>
</comment>
<comment type="developmental stage">
    <text>The crystal protein is produced during sporulation.</text>
</comment>
<comment type="similarity">
    <text evidence="1">Belongs to the delta endotoxin family.</text>
</comment>
<evidence type="ECO:0000250" key="1">
    <source>
        <dbReference type="UniProtKB" id="P16480"/>
    </source>
</evidence>
<accession>P84613</accession>
<sequence length="281" mass="31811">MDFFITNGTRLLEKELTAGSGQITYDVNKNIFGLPILKRRENQGNPTLFPTYDNYSHILSFIKSLSIPATYKTQVYTFAWTHSSVDPKNTIYTHLTTQIPAVKANSLGTASKVVQGPGHTGGDLIDFKDHFKITCQHSNFQQSYFIRIRYASNGSANTRAVINLSIPGVAELGMALNPTFSGTDYTNLKYKDFQYLEFSNEVKFAPNQNISLVFNRSDVYTNTTVLIDKIEFLPITRSIREDREKQKLETVQQIINTFYANPIKNTLQSELTDYDIDQAAN</sequence>
<protein>
    <recommendedName>
        <fullName>Insecticidal crystal toxin protein</fullName>
    </recommendedName>
</protein>
<proteinExistence type="evidence at protein level"/>
<organism>
    <name type="scientific">Bacillus thuringiensis subsp. kurstaki</name>
    <dbReference type="NCBI Taxonomy" id="29339"/>
    <lineage>
        <taxon>Bacteria</taxon>
        <taxon>Bacillati</taxon>
        <taxon>Bacillota</taxon>
        <taxon>Bacilli</taxon>
        <taxon>Bacillales</taxon>
        <taxon>Bacillaceae</taxon>
        <taxon>Bacillus</taxon>
        <taxon>Bacillus cereus group</taxon>
    </lineage>
</organism>
<dbReference type="SMR" id="P84613"/>
<dbReference type="GO" id="GO:0005102">
    <property type="term" value="F:signaling receptor binding"/>
    <property type="evidence" value="ECO:0007669"/>
    <property type="project" value="InterPro"/>
</dbReference>
<dbReference type="GO" id="GO:0090729">
    <property type="term" value="F:toxin activity"/>
    <property type="evidence" value="ECO:0007669"/>
    <property type="project" value="UniProtKB-KW"/>
</dbReference>
<dbReference type="GO" id="GO:0030435">
    <property type="term" value="P:sporulation resulting in formation of a cellular spore"/>
    <property type="evidence" value="ECO:0007669"/>
    <property type="project" value="UniProtKB-KW"/>
</dbReference>
<dbReference type="CDD" id="cd04085">
    <property type="entry name" value="delta_endotoxin_C"/>
    <property type="match status" value="1"/>
</dbReference>
<dbReference type="Gene3D" id="2.60.120.260">
    <property type="entry name" value="Galactose-binding domain-like"/>
    <property type="match status" value="1"/>
</dbReference>
<dbReference type="Gene3D" id="2.100.10.10">
    <property type="entry name" value="Pesticidal crystal protein, central domain"/>
    <property type="match status" value="1"/>
</dbReference>
<dbReference type="InterPro" id="IPR008979">
    <property type="entry name" value="Galactose-bd-like_sf"/>
</dbReference>
<dbReference type="InterPro" id="IPR005638">
    <property type="entry name" value="Pest_crys_dom-III"/>
</dbReference>
<dbReference type="InterPro" id="IPR036399">
    <property type="entry name" value="Pest_cryst_cen_dom_sf"/>
</dbReference>
<dbReference type="InterPro" id="IPR001178">
    <property type="entry name" value="Pest_cryst_dom_II"/>
</dbReference>
<dbReference type="Pfam" id="PF03944">
    <property type="entry name" value="Endotoxin_C"/>
    <property type="match status" value="1"/>
</dbReference>
<dbReference type="Pfam" id="PF00555">
    <property type="entry name" value="Endotoxin_M"/>
    <property type="match status" value="1"/>
</dbReference>
<dbReference type="SUPFAM" id="SSF51096">
    <property type="entry name" value="delta-Endotoxin (insectocide), middle domain"/>
    <property type="match status" value="1"/>
</dbReference>
<dbReference type="SUPFAM" id="SSF49785">
    <property type="entry name" value="Galactose-binding domain-like"/>
    <property type="match status" value="1"/>
</dbReference>